<evidence type="ECO:0000255" key="1">
    <source>
        <dbReference type="HAMAP-Rule" id="MF_01454"/>
    </source>
</evidence>
<evidence type="ECO:0000255" key="2">
    <source>
        <dbReference type="PROSITE-ProRule" id="PRU01229"/>
    </source>
</evidence>
<evidence type="ECO:0000255" key="3">
    <source>
        <dbReference type="PROSITE-ProRule" id="PRU01231"/>
    </source>
</evidence>
<evidence type="ECO:0000256" key="4">
    <source>
        <dbReference type="SAM" id="MobiDB-lite"/>
    </source>
</evidence>
<dbReference type="EC" id="3.6.5.-" evidence="1"/>
<dbReference type="EMBL" id="BX571856">
    <property type="protein sequence ID" value="CAG40715.1"/>
    <property type="molecule type" value="Genomic_DNA"/>
</dbReference>
<dbReference type="SMR" id="Q6GG60"/>
<dbReference type="KEGG" id="sar:SAR1724"/>
<dbReference type="HOGENOM" id="CLU_011747_2_1_9"/>
<dbReference type="Proteomes" id="UP000000596">
    <property type="component" value="Chromosome"/>
</dbReference>
<dbReference type="GO" id="GO:0005737">
    <property type="term" value="C:cytoplasm"/>
    <property type="evidence" value="ECO:0007669"/>
    <property type="project" value="UniProtKB-SubCell"/>
</dbReference>
<dbReference type="GO" id="GO:0005525">
    <property type="term" value="F:GTP binding"/>
    <property type="evidence" value="ECO:0007669"/>
    <property type="project" value="UniProtKB-UniRule"/>
</dbReference>
<dbReference type="GO" id="GO:0003924">
    <property type="term" value="F:GTPase activity"/>
    <property type="evidence" value="ECO:0007669"/>
    <property type="project" value="UniProtKB-UniRule"/>
</dbReference>
<dbReference type="GO" id="GO:0000287">
    <property type="term" value="F:magnesium ion binding"/>
    <property type="evidence" value="ECO:0007669"/>
    <property type="project" value="InterPro"/>
</dbReference>
<dbReference type="GO" id="GO:0042254">
    <property type="term" value="P:ribosome biogenesis"/>
    <property type="evidence" value="ECO:0007669"/>
    <property type="project" value="UniProtKB-UniRule"/>
</dbReference>
<dbReference type="CDD" id="cd01898">
    <property type="entry name" value="Obg"/>
    <property type="match status" value="1"/>
</dbReference>
<dbReference type="FunFam" id="2.70.210.12:FF:000001">
    <property type="entry name" value="GTPase Obg"/>
    <property type="match status" value="1"/>
</dbReference>
<dbReference type="FunFam" id="3.40.50.300:FF:000515">
    <property type="entry name" value="GTPase Obg"/>
    <property type="match status" value="1"/>
</dbReference>
<dbReference type="Gene3D" id="3.30.300.350">
    <property type="entry name" value="GTP-binding protein OBG, C-terminal domain"/>
    <property type="match status" value="1"/>
</dbReference>
<dbReference type="Gene3D" id="2.70.210.12">
    <property type="entry name" value="GTP1/OBG domain"/>
    <property type="match status" value="1"/>
</dbReference>
<dbReference type="Gene3D" id="3.40.50.300">
    <property type="entry name" value="P-loop containing nucleotide triphosphate hydrolases"/>
    <property type="match status" value="1"/>
</dbReference>
<dbReference type="HAMAP" id="MF_01454">
    <property type="entry name" value="GTPase_Obg"/>
    <property type="match status" value="1"/>
</dbReference>
<dbReference type="InterPro" id="IPR031167">
    <property type="entry name" value="G_OBG"/>
</dbReference>
<dbReference type="InterPro" id="IPR006073">
    <property type="entry name" value="GTP-bd"/>
</dbReference>
<dbReference type="InterPro" id="IPR014100">
    <property type="entry name" value="GTP-bd_Obg/CgtA"/>
</dbReference>
<dbReference type="InterPro" id="IPR036346">
    <property type="entry name" value="GTP-bd_prot_GTP1/OBG_C_sf"/>
</dbReference>
<dbReference type="InterPro" id="IPR006074">
    <property type="entry name" value="GTP1-OBG_CS"/>
</dbReference>
<dbReference type="InterPro" id="IPR006169">
    <property type="entry name" value="GTP1_OBG_dom"/>
</dbReference>
<dbReference type="InterPro" id="IPR036726">
    <property type="entry name" value="GTP1_OBG_dom_sf"/>
</dbReference>
<dbReference type="InterPro" id="IPR045086">
    <property type="entry name" value="OBG_GTPase"/>
</dbReference>
<dbReference type="InterPro" id="IPR015349">
    <property type="entry name" value="OCT_dom"/>
</dbReference>
<dbReference type="InterPro" id="IPR027417">
    <property type="entry name" value="P-loop_NTPase"/>
</dbReference>
<dbReference type="NCBIfam" id="TIGR02729">
    <property type="entry name" value="Obg_CgtA"/>
    <property type="match status" value="1"/>
</dbReference>
<dbReference type="NCBIfam" id="TIGR03595">
    <property type="entry name" value="Obg_CgtA_exten"/>
    <property type="match status" value="1"/>
</dbReference>
<dbReference type="NCBIfam" id="NF008954">
    <property type="entry name" value="PRK12296.1"/>
    <property type="match status" value="1"/>
</dbReference>
<dbReference type="NCBIfam" id="NF008955">
    <property type="entry name" value="PRK12297.1"/>
    <property type="match status" value="1"/>
</dbReference>
<dbReference type="NCBIfam" id="NF008956">
    <property type="entry name" value="PRK12299.1"/>
    <property type="match status" value="1"/>
</dbReference>
<dbReference type="PANTHER" id="PTHR11702">
    <property type="entry name" value="DEVELOPMENTALLY REGULATED GTP-BINDING PROTEIN-RELATED"/>
    <property type="match status" value="1"/>
</dbReference>
<dbReference type="PANTHER" id="PTHR11702:SF31">
    <property type="entry name" value="MITOCHONDRIAL RIBOSOME-ASSOCIATED GTPASE 2"/>
    <property type="match status" value="1"/>
</dbReference>
<dbReference type="Pfam" id="PF09269">
    <property type="entry name" value="DUF1967"/>
    <property type="match status" value="1"/>
</dbReference>
<dbReference type="Pfam" id="PF01018">
    <property type="entry name" value="GTP1_OBG"/>
    <property type="match status" value="1"/>
</dbReference>
<dbReference type="Pfam" id="PF01926">
    <property type="entry name" value="MMR_HSR1"/>
    <property type="match status" value="1"/>
</dbReference>
<dbReference type="PIRSF" id="PIRSF002401">
    <property type="entry name" value="GTP_bd_Obg/CgtA"/>
    <property type="match status" value="1"/>
</dbReference>
<dbReference type="PRINTS" id="PR00326">
    <property type="entry name" value="GTP1OBG"/>
</dbReference>
<dbReference type="SUPFAM" id="SSF102741">
    <property type="entry name" value="Obg GTP-binding protein C-terminal domain"/>
    <property type="match status" value="1"/>
</dbReference>
<dbReference type="SUPFAM" id="SSF82051">
    <property type="entry name" value="Obg GTP-binding protein N-terminal domain"/>
    <property type="match status" value="1"/>
</dbReference>
<dbReference type="SUPFAM" id="SSF52540">
    <property type="entry name" value="P-loop containing nucleoside triphosphate hydrolases"/>
    <property type="match status" value="1"/>
</dbReference>
<dbReference type="PROSITE" id="PS51710">
    <property type="entry name" value="G_OBG"/>
    <property type="match status" value="1"/>
</dbReference>
<dbReference type="PROSITE" id="PS00905">
    <property type="entry name" value="GTP1_OBG"/>
    <property type="match status" value="1"/>
</dbReference>
<dbReference type="PROSITE" id="PS51883">
    <property type="entry name" value="OBG"/>
    <property type="match status" value="1"/>
</dbReference>
<dbReference type="PROSITE" id="PS51881">
    <property type="entry name" value="OCT"/>
    <property type="match status" value="1"/>
</dbReference>
<gene>
    <name evidence="1" type="primary">obg</name>
    <name type="ordered locus">SAR1724</name>
</gene>
<keyword id="KW-0963">Cytoplasm</keyword>
<keyword id="KW-0342">GTP-binding</keyword>
<keyword id="KW-0378">Hydrolase</keyword>
<keyword id="KW-0460">Magnesium</keyword>
<keyword id="KW-0479">Metal-binding</keyword>
<keyword id="KW-0547">Nucleotide-binding</keyword>
<organism>
    <name type="scientific">Staphylococcus aureus (strain MRSA252)</name>
    <dbReference type="NCBI Taxonomy" id="282458"/>
    <lineage>
        <taxon>Bacteria</taxon>
        <taxon>Bacillati</taxon>
        <taxon>Bacillota</taxon>
        <taxon>Bacilli</taxon>
        <taxon>Bacillales</taxon>
        <taxon>Staphylococcaceae</taxon>
        <taxon>Staphylococcus</taxon>
    </lineage>
</organism>
<reference key="1">
    <citation type="journal article" date="2004" name="Proc. Natl. Acad. Sci. U.S.A.">
        <title>Complete genomes of two clinical Staphylococcus aureus strains: evidence for the rapid evolution of virulence and drug resistance.</title>
        <authorList>
            <person name="Holden M.T.G."/>
            <person name="Feil E.J."/>
            <person name="Lindsay J.A."/>
            <person name="Peacock S.J."/>
            <person name="Day N.P.J."/>
            <person name="Enright M.C."/>
            <person name="Foster T.J."/>
            <person name="Moore C.E."/>
            <person name="Hurst L."/>
            <person name="Atkin R."/>
            <person name="Barron A."/>
            <person name="Bason N."/>
            <person name="Bentley S.D."/>
            <person name="Chillingworth C."/>
            <person name="Chillingworth T."/>
            <person name="Churcher C."/>
            <person name="Clark L."/>
            <person name="Corton C."/>
            <person name="Cronin A."/>
            <person name="Doggett J."/>
            <person name="Dowd L."/>
            <person name="Feltwell T."/>
            <person name="Hance Z."/>
            <person name="Harris B."/>
            <person name="Hauser H."/>
            <person name="Holroyd S."/>
            <person name="Jagels K."/>
            <person name="James K.D."/>
            <person name="Lennard N."/>
            <person name="Line A."/>
            <person name="Mayes R."/>
            <person name="Moule S."/>
            <person name="Mungall K."/>
            <person name="Ormond D."/>
            <person name="Quail M.A."/>
            <person name="Rabbinowitsch E."/>
            <person name="Rutherford K.M."/>
            <person name="Sanders M."/>
            <person name="Sharp S."/>
            <person name="Simmonds M."/>
            <person name="Stevens K."/>
            <person name="Whitehead S."/>
            <person name="Barrell B.G."/>
            <person name="Spratt B.G."/>
            <person name="Parkhill J."/>
        </authorList>
    </citation>
    <scope>NUCLEOTIDE SEQUENCE [LARGE SCALE GENOMIC DNA]</scope>
    <source>
        <strain>MRSA252</strain>
    </source>
</reference>
<proteinExistence type="inferred from homology"/>
<protein>
    <recommendedName>
        <fullName evidence="1">GTPase Obg</fullName>
        <ecNumber evidence="1">3.6.5.-</ecNumber>
    </recommendedName>
    <alternativeName>
        <fullName evidence="1">GTP-binding protein Obg</fullName>
    </alternativeName>
</protein>
<sequence>MFVDQVKISLKAGDGGNGITAYRREKYVPFGGPAGGDGGKGASVVFEVDEGLRTLLDFRYQRHFKASKGENGQSSNMHGKNAEDLVLKVPPGTIIKNVETDEVLADLVEDGQRAVVAKGGRGGRGNSRFATPRNPAPDFSEKGEPGEELDVSLELKLLADVGLVGFPSVGKSTLLSIVSKAKPKIGAYHFTTIKPNLGVVSTPDQRSFVMADLPGLIEGASDGVGLGHQFLRHVERTKVIVHMIDMSGSEGREPIEDYKVINQELAAYEQRLEDRPQIVVANKMDLPESQDNLILFKEEIGEDVPVIPVSTITRDNIDQLLYAIADKLEEYKDVDFTVEEEESVGINRVLYKHTPSQDKFTISRDDDGAYVVSGNAIERMFKMTDFNSDPAVRRFARQMRSMGIDDALRERGCKNGDIVRILGGEFEFVE</sequence>
<accession>Q6GG60</accession>
<name>OBG_STAAR</name>
<feature type="chain" id="PRO_0000386272" description="GTPase Obg">
    <location>
        <begin position="1"/>
        <end position="430"/>
    </location>
</feature>
<feature type="domain" description="Obg" evidence="3">
    <location>
        <begin position="1"/>
        <end position="158"/>
    </location>
</feature>
<feature type="domain" description="OBG-type G" evidence="1">
    <location>
        <begin position="159"/>
        <end position="329"/>
    </location>
</feature>
<feature type="domain" description="OCT" evidence="2">
    <location>
        <begin position="352"/>
        <end position="430"/>
    </location>
</feature>
<feature type="region of interest" description="Disordered" evidence="4">
    <location>
        <begin position="118"/>
        <end position="145"/>
    </location>
</feature>
<feature type="binding site" evidence="1">
    <location>
        <begin position="165"/>
        <end position="172"/>
    </location>
    <ligand>
        <name>GTP</name>
        <dbReference type="ChEBI" id="CHEBI:37565"/>
    </ligand>
</feature>
<feature type="binding site" evidence="1">
    <location>
        <position position="172"/>
    </location>
    <ligand>
        <name>Mg(2+)</name>
        <dbReference type="ChEBI" id="CHEBI:18420"/>
    </ligand>
</feature>
<feature type="binding site" evidence="1">
    <location>
        <begin position="190"/>
        <end position="194"/>
    </location>
    <ligand>
        <name>GTP</name>
        <dbReference type="ChEBI" id="CHEBI:37565"/>
    </ligand>
</feature>
<feature type="binding site" evidence="1">
    <location>
        <position position="192"/>
    </location>
    <ligand>
        <name>Mg(2+)</name>
        <dbReference type="ChEBI" id="CHEBI:18420"/>
    </ligand>
</feature>
<feature type="binding site" evidence="1">
    <location>
        <begin position="212"/>
        <end position="215"/>
    </location>
    <ligand>
        <name>GTP</name>
        <dbReference type="ChEBI" id="CHEBI:37565"/>
    </ligand>
</feature>
<feature type="binding site" evidence="1">
    <location>
        <begin position="282"/>
        <end position="285"/>
    </location>
    <ligand>
        <name>GTP</name>
        <dbReference type="ChEBI" id="CHEBI:37565"/>
    </ligand>
</feature>
<feature type="binding site" evidence="1">
    <location>
        <begin position="310"/>
        <end position="312"/>
    </location>
    <ligand>
        <name>GTP</name>
        <dbReference type="ChEBI" id="CHEBI:37565"/>
    </ligand>
</feature>
<comment type="function">
    <text evidence="1">An essential GTPase which binds GTP, GDP and possibly (p)ppGpp with moderate affinity, with high nucleotide exchange rates and a fairly low GTP hydrolysis rate. Plays a role in control of the cell cycle, stress response, ribosome biogenesis and in those bacteria that undergo differentiation, in morphogenesis control.</text>
</comment>
<comment type="cofactor">
    <cofactor evidence="1">
        <name>Mg(2+)</name>
        <dbReference type="ChEBI" id="CHEBI:18420"/>
    </cofactor>
</comment>
<comment type="subunit">
    <text evidence="1">Monomer.</text>
</comment>
<comment type="subcellular location">
    <subcellularLocation>
        <location evidence="1">Cytoplasm</location>
    </subcellularLocation>
</comment>
<comment type="similarity">
    <text evidence="1">Belongs to the TRAFAC class OBG-HflX-like GTPase superfamily. OBG GTPase family.</text>
</comment>